<gene>
    <name evidence="1" type="primary">mutL</name>
    <name type="ordered locus">BruAb2_0214</name>
</gene>
<dbReference type="EMBL" id="AE017224">
    <property type="protein sequence ID" value="AAX75657.1"/>
    <property type="molecule type" value="Genomic_DNA"/>
</dbReference>
<dbReference type="RefSeq" id="WP_002966364.1">
    <property type="nucleotide sequence ID" value="NC_006933.1"/>
</dbReference>
<dbReference type="SMR" id="Q579M7"/>
<dbReference type="EnsemblBacteria" id="AAX75657">
    <property type="protein sequence ID" value="AAX75657"/>
    <property type="gene ID" value="BruAb2_0214"/>
</dbReference>
<dbReference type="GeneID" id="97535595"/>
<dbReference type="KEGG" id="bmb:BruAb2_0214"/>
<dbReference type="HOGENOM" id="CLU_004131_4_2_5"/>
<dbReference type="Proteomes" id="UP000000540">
    <property type="component" value="Chromosome II"/>
</dbReference>
<dbReference type="GO" id="GO:0032300">
    <property type="term" value="C:mismatch repair complex"/>
    <property type="evidence" value="ECO:0007669"/>
    <property type="project" value="InterPro"/>
</dbReference>
<dbReference type="GO" id="GO:0005524">
    <property type="term" value="F:ATP binding"/>
    <property type="evidence" value="ECO:0007669"/>
    <property type="project" value="InterPro"/>
</dbReference>
<dbReference type="GO" id="GO:0016887">
    <property type="term" value="F:ATP hydrolysis activity"/>
    <property type="evidence" value="ECO:0007669"/>
    <property type="project" value="InterPro"/>
</dbReference>
<dbReference type="GO" id="GO:0140664">
    <property type="term" value="F:ATP-dependent DNA damage sensor activity"/>
    <property type="evidence" value="ECO:0007669"/>
    <property type="project" value="InterPro"/>
</dbReference>
<dbReference type="GO" id="GO:0030983">
    <property type="term" value="F:mismatched DNA binding"/>
    <property type="evidence" value="ECO:0007669"/>
    <property type="project" value="InterPro"/>
</dbReference>
<dbReference type="GO" id="GO:0006298">
    <property type="term" value="P:mismatch repair"/>
    <property type="evidence" value="ECO:0007669"/>
    <property type="project" value="UniProtKB-UniRule"/>
</dbReference>
<dbReference type="CDD" id="cd16926">
    <property type="entry name" value="HATPase_MutL-MLH-PMS-like"/>
    <property type="match status" value="1"/>
</dbReference>
<dbReference type="CDD" id="cd00782">
    <property type="entry name" value="MutL_Trans"/>
    <property type="match status" value="1"/>
</dbReference>
<dbReference type="FunFam" id="3.30.565.10:FF:000003">
    <property type="entry name" value="DNA mismatch repair endonuclease MutL"/>
    <property type="match status" value="1"/>
</dbReference>
<dbReference type="Gene3D" id="3.30.230.10">
    <property type="match status" value="1"/>
</dbReference>
<dbReference type="Gene3D" id="3.30.565.10">
    <property type="entry name" value="Histidine kinase-like ATPase, C-terminal domain"/>
    <property type="match status" value="1"/>
</dbReference>
<dbReference type="Gene3D" id="3.30.1540.20">
    <property type="entry name" value="MutL, C-terminal domain, dimerisation subdomain"/>
    <property type="match status" value="1"/>
</dbReference>
<dbReference type="Gene3D" id="3.30.1370.100">
    <property type="entry name" value="MutL, C-terminal domain, regulatory subdomain"/>
    <property type="match status" value="1"/>
</dbReference>
<dbReference type="HAMAP" id="MF_00149">
    <property type="entry name" value="DNA_mis_repair"/>
    <property type="match status" value="1"/>
</dbReference>
<dbReference type="InterPro" id="IPR014762">
    <property type="entry name" value="DNA_mismatch_repair_CS"/>
</dbReference>
<dbReference type="InterPro" id="IPR020667">
    <property type="entry name" value="DNA_mismatch_repair_MutL"/>
</dbReference>
<dbReference type="InterPro" id="IPR013507">
    <property type="entry name" value="DNA_mismatch_S5_2-like"/>
</dbReference>
<dbReference type="InterPro" id="IPR036890">
    <property type="entry name" value="HATPase_C_sf"/>
</dbReference>
<dbReference type="InterPro" id="IPR002099">
    <property type="entry name" value="MutL/Mlh/PMS"/>
</dbReference>
<dbReference type="InterPro" id="IPR038973">
    <property type="entry name" value="MutL/Mlh/Pms-like"/>
</dbReference>
<dbReference type="InterPro" id="IPR014790">
    <property type="entry name" value="MutL_C"/>
</dbReference>
<dbReference type="InterPro" id="IPR042120">
    <property type="entry name" value="MutL_C_dimsub"/>
</dbReference>
<dbReference type="InterPro" id="IPR042121">
    <property type="entry name" value="MutL_C_regsub"/>
</dbReference>
<dbReference type="InterPro" id="IPR037198">
    <property type="entry name" value="MutL_C_sf"/>
</dbReference>
<dbReference type="InterPro" id="IPR020568">
    <property type="entry name" value="Ribosomal_Su5_D2-typ_SF"/>
</dbReference>
<dbReference type="InterPro" id="IPR014721">
    <property type="entry name" value="Ribsml_uS5_D2-typ_fold_subgr"/>
</dbReference>
<dbReference type="NCBIfam" id="TIGR00585">
    <property type="entry name" value="mutl"/>
    <property type="match status" value="1"/>
</dbReference>
<dbReference type="NCBIfam" id="NF000953">
    <property type="entry name" value="PRK00095.2-4"/>
    <property type="match status" value="1"/>
</dbReference>
<dbReference type="PANTHER" id="PTHR10073">
    <property type="entry name" value="DNA MISMATCH REPAIR PROTEIN MLH, PMS, MUTL"/>
    <property type="match status" value="1"/>
</dbReference>
<dbReference type="PANTHER" id="PTHR10073:SF12">
    <property type="entry name" value="DNA MISMATCH REPAIR PROTEIN MLH1"/>
    <property type="match status" value="1"/>
</dbReference>
<dbReference type="Pfam" id="PF01119">
    <property type="entry name" value="DNA_mis_repair"/>
    <property type="match status" value="1"/>
</dbReference>
<dbReference type="Pfam" id="PF13589">
    <property type="entry name" value="HATPase_c_3"/>
    <property type="match status" value="1"/>
</dbReference>
<dbReference type="Pfam" id="PF08676">
    <property type="entry name" value="MutL_C"/>
    <property type="match status" value="1"/>
</dbReference>
<dbReference type="SMART" id="SM01340">
    <property type="entry name" value="DNA_mis_repair"/>
    <property type="match status" value="1"/>
</dbReference>
<dbReference type="SMART" id="SM00853">
    <property type="entry name" value="MutL_C"/>
    <property type="match status" value="1"/>
</dbReference>
<dbReference type="SUPFAM" id="SSF55874">
    <property type="entry name" value="ATPase domain of HSP90 chaperone/DNA topoisomerase II/histidine kinase"/>
    <property type="match status" value="1"/>
</dbReference>
<dbReference type="SUPFAM" id="SSF118116">
    <property type="entry name" value="DNA mismatch repair protein MutL"/>
    <property type="match status" value="1"/>
</dbReference>
<dbReference type="SUPFAM" id="SSF54211">
    <property type="entry name" value="Ribosomal protein S5 domain 2-like"/>
    <property type="match status" value="1"/>
</dbReference>
<dbReference type="PROSITE" id="PS00058">
    <property type="entry name" value="DNA_MISMATCH_REPAIR_1"/>
    <property type="match status" value="1"/>
</dbReference>
<organism>
    <name type="scientific">Brucella abortus biovar 1 (strain 9-941)</name>
    <dbReference type="NCBI Taxonomy" id="262698"/>
    <lineage>
        <taxon>Bacteria</taxon>
        <taxon>Pseudomonadati</taxon>
        <taxon>Pseudomonadota</taxon>
        <taxon>Alphaproteobacteria</taxon>
        <taxon>Hyphomicrobiales</taxon>
        <taxon>Brucellaceae</taxon>
        <taxon>Brucella/Ochrobactrum group</taxon>
        <taxon>Brucella</taxon>
    </lineage>
</organism>
<proteinExistence type="inferred from homology"/>
<reference key="1">
    <citation type="journal article" date="2005" name="J. Bacteriol.">
        <title>Completion of the genome sequence of Brucella abortus and comparison to the highly similar genomes of Brucella melitensis and Brucella suis.</title>
        <authorList>
            <person name="Halling S.M."/>
            <person name="Peterson-Burch B.D."/>
            <person name="Bricker B.J."/>
            <person name="Zuerner R.L."/>
            <person name="Qing Z."/>
            <person name="Li L.-L."/>
            <person name="Kapur V."/>
            <person name="Alt D.P."/>
            <person name="Olsen S.C."/>
        </authorList>
    </citation>
    <scope>NUCLEOTIDE SEQUENCE [LARGE SCALE GENOMIC DNA]</scope>
    <source>
        <strain>9-941</strain>
    </source>
</reference>
<sequence>MTIRHLSETIINQIAAGEVIERPASVIKELVENAIDAGATRIEVVTAGGGKTLLRVTDNGSGIPADELALAVSRHCTSKLTDDVHDIRALGFRGEALPSIGSVSKLTLKSRPQDADSGFEVCVTGGHLDGPRPTALNRGTIVEVRDLFYATPARLKFMKTDRAEATAITDVVKRIGIAFPHIRFSLAGTDRTPFEMPATGTGAEATLERIGQVLGREFGENALAIDAERDGVRLAGFVGIPSFNRGNALHQFAYVNGRPVRDKQIFGALRGAYSDVIARDRHPVAVLFLTLDPALVDVNVHPAKADVRFRDPGLVRGLIVGAIKQALAQSGIRPATSGAEAMLQAFRAEGFGAQQSAPRPANSYSPASWRTAPPAPRSEWSPQTAHPAHRPLDLQAAPALRENGQAVLGDVAVPAADARASVAEAPVELMQKPLGAARAQIHENYIVAQTEDSLVIVDQHAAHERLVYEALKNALHARPIAGQMLLIPEIVDLPEEDAQRLAGHAETLARFGLGVEQFGPGAIAVRETPAMLGEMNVQQLIRDLADEIAEHDTADGLKAMLHHVAATMACHGSVRSGRRLKPEEMNALLRDMEATPGSGTCNHGRPTYIELKLTDIERLFGRR</sequence>
<name>MUTL_BRUAB</name>
<comment type="function">
    <text evidence="1">This protein is involved in the repair of mismatches in DNA. It is required for dam-dependent methyl-directed DNA mismatch repair. May act as a 'molecular matchmaker', a protein that promotes the formation of a stable complex between two or more DNA-binding proteins in an ATP-dependent manner without itself being part of a final effector complex.</text>
</comment>
<comment type="similarity">
    <text evidence="1">Belongs to the DNA mismatch repair MutL/HexB family.</text>
</comment>
<feature type="chain" id="PRO_1000009998" description="DNA mismatch repair protein MutL">
    <location>
        <begin position="1"/>
        <end position="623"/>
    </location>
</feature>
<feature type="region of interest" description="Disordered" evidence="2">
    <location>
        <begin position="353"/>
        <end position="389"/>
    </location>
</feature>
<feature type="compositionally biased region" description="Polar residues" evidence="2">
    <location>
        <begin position="353"/>
        <end position="368"/>
    </location>
</feature>
<protein>
    <recommendedName>
        <fullName evidence="1">DNA mismatch repair protein MutL</fullName>
    </recommendedName>
</protein>
<accession>Q579M7</accession>
<keyword id="KW-0227">DNA damage</keyword>
<keyword id="KW-0234">DNA repair</keyword>
<evidence type="ECO:0000255" key="1">
    <source>
        <dbReference type="HAMAP-Rule" id="MF_00149"/>
    </source>
</evidence>
<evidence type="ECO:0000256" key="2">
    <source>
        <dbReference type="SAM" id="MobiDB-lite"/>
    </source>
</evidence>